<organism>
    <name type="scientific">Xenopus laevis</name>
    <name type="common">African clawed frog</name>
    <dbReference type="NCBI Taxonomy" id="8355"/>
    <lineage>
        <taxon>Eukaryota</taxon>
        <taxon>Metazoa</taxon>
        <taxon>Chordata</taxon>
        <taxon>Craniata</taxon>
        <taxon>Vertebrata</taxon>
        <taxon>Euteleostomi</taxon>
        <taxon>Amphibia</taxon>
        <taxon>Batrachia</taxon>
        <taxon>Anura</taxon>
        <taxon>Pipoidea</taxon>
        <taxon>Pipidae</taxon>
        <taxon>Xenopodinae</taxon>
        <taxon>Xenopus</taxon>
        <taxon>Xenopus</taxon>
    </lineage>
</organism>
<reference key="1">
    <citation type="journal article" date="1997" name="Development">
        <title>Mago nashi mediates the posterior follicle cell-to-oocyte signal to organize axis formation in Drosophila.</title>
        <authorList>
            <person name="Newmark P.A."/>
            <person name="Mohr S.E."/>
            <person name="Gong L."/>
            <person name="Boswell R.E."/>
        </authorList>
    </citation>
    <scope>NUCLEOTIDE SEQUENCE [MRNA]</scope>
</reference>
<reference key="2">
    <citation type="submission" date="2003-06" db="EMBL/GenBank/DDBJ databases">
        <authorList>
            <consortium name="NIH - Xenopus Gene Collection (XGC) project"/>
        </authorList>
    </citation>
    <scope>NUCLEOTIDE SEQUENCE [LARGE SCALE MRNA]</scope>
</reference>
<accession>O42149</accession>
<accession>Q6B0K3</accession>
<dbReference type="EMBL" id="AF007860">
    <property type="protein sequence ID" value="AAB66720.1"/>
    <property type="molecule type" value="mRNA"/>
</dbReference>
<dbReference type="EMBL" id="BC053764">
    <property type="protein sequence ID" value="AAH53764.1"/>
    <property type="molecule type" value="mRNA"/>
</dbReference>
<dbReference type="RefSeq" id="NP_001079724.1">
    <property type="nucleotide sequence ID" value="NM_001086255.1"/>
</dbReference>
<dbReference type="SMR" id="O42149"/>
<dbReference type="DNASU" id="379411"/>
<dbReference type="GeneID" id="379411"/>
<dbReference type="KEGG" id="xla:379411"/>
<dbReference type="AGR" id="Xenbase:XB-GENE-493544"/>
<dbReference type="CTD" id="379411"/>
<dbReference type="Xenbase" id="XB-GENE-493544">
    <property type="gene designation" value="magoh.L"/>
</dbReference>
<dbReference type="OMA" id="NQTDEFY"/>
<dbReference type="OrthoDB" id="6495301at2759"/>
<dbReference type="Proteomes" id="UP000186698">
    <property type="component" value="Chromosome 4L"/>
</dbReference>
<dbReference type="Bgee" id="379411">
    <property type="expression patterns" value="Expressed in gastrula and 19 other cell types or tissues"/>
</dbReference>
<dbReference type="GO" id="GO:0071013">
    <property type="term" value="C:catalytic step 2 spliceosome"/>
    <property type="evidence" value="ECO:0000318"/>
    <property type="project" value="GO_Central"/>
</dbReference>
<dbReference type="GO" id="GO:0005737">
    <property type="term" value="C:cytoplasm"/>
    <property type="evidence" value="ECO:0007669"/>
    <property type="project" value="UniProtKB-SubCell"/>
</dbReference>
<dbReference type="GO" id="GO:0035145">
    <property type="term" value="C:exon-exon junction complex"/>
    <property type="evidence" value="ECO:0000318"/>
    <property type="project" value="GO_Central"/>
</dbReference>
<dbReference type="GO" id="GO:0016607">
    <property type="term" value="C:nuclear speck"/>
    <property type="evidence" value="ECO:0007669"/>
    <property type="project" value="UniProtKB-SubCell"/>
</dbReference>
<dbReference type="GO" id="GO:0003723">
    <property type="term" value="F:RNA binding"/>
    <property type="evidence" value="ECO:0007669"/>
    <property type="project" value="UniProtKB-KW"/>
</dbReference>
<dbReference type="GO" id="GO:0006397">
    <property type="term" value="P:mRNA processing"/>
    <property type="evidence" value="ECO:0007669"/>
    <property type="project" value="UniProtKB-KW"/>
</dbReference>
<dbReference type="GO" id="GO:0051028">
    <property type="term" value="P:mRNA transport"/>
    <property type="evidence" value="ECO:0007669"/>
    <property type="project" value="UniProtKB-KW"/>
</dbReference>
<dbReference type="GO" id="GO:0008380">
    <property type="term" value="P:RNA splicing"/>
    <property type="evidence" value="ECO:0000318"/>
    <property type="project" value="GO_Central"/>
</dbReference>
<dbReference type="CDD" id="cd11295">
    <property type="entry name" value="Mago_nashi"/>
    <property type="match status" value="1"/>
</dbReference>
<dbReference type="FunFam" id="3.30.1560.10:FF:000001">
    <property type="entry name" value="Protein mago nashi homolog"/>
    <property type="match status" value="1"/>
</dbReference>
<dbReference type="Gene3D" id="3.30.1560.10">
    <property type="entry name" value="Mago nashi"/>
    <property type="match status" value="1"/>
</dbReference>
<dbReference type="InterPro" id="IPR004023">
    <property type="entry name" value="Mago_nashi"/>
</dbReference>
<dbReference type="InterPro" id="IPR036605">
    <property type="entry name" value="Mago_nashi_sf"/>
</dbReference>
<dbReference type="PANTHER" id="PTHR12638:SF0">
    <property type="entry name" value="MAGO HOMOLOG, EXON JUNCTION COMPLEX SUBUNIT-RELATED"/>
    <property type="match status" value="1"/>
</dbReference>
<dbReference type="PANTHER" id="PTHR12638">
    <property type="entry name" value="PROTEIN MAGO NASHI HOMOLOG"/>
    <property type="match status" value="1"/>
</dbReference>
<dbReference type="Pfam" id="PF02792">
    <property type="entry name" value="Mago_nashi"/>
    <property type="match status" value="1"/>
</dbReference>
<dbReference type="SUPFAM" id="SSF89817">
    <property type="entry name" value="Mago nashi protein"/>
    <property type="match status" value="1"/>
</dbReference>
<feature type="chain" id="PRO_0000174150" description="Protein mago nashi homolog">
    <location>
        <begin position="1"/>
        <end position="146"/>
    </location>
</feature>
<gene>
    <name type="primary">magoh</name>
</gene>
<protein>
    <recommendedName>
        <fullName>Protein mago nashi homolog</fullName>
    </recommendedName>
    <alternativeName>
        <fullName>Xl-mago</fullName>
    </alternativeName>
</protein>
<comment type="function">
    <text evidence="1">Core component of the splicing-dependent multiprotein exon junction complex (EJC) deposited at splice junctions on mRNAs. The EJC is a dynamic structure consisting of core proteins and several peripheral nuclear and cytoplasmic associated factors that join the complex only transiently either during EJC assembly or during subsequent mRNA metabolism. The EJC marks the position of the exon-exon junction in the mature mRNA for the gene expression machinery and the core components remain bound to spliced mRNAs throughout all stages of mRNA metabolism thereby influencing downstream processes including nuclear mRNA export, subcellular mRNA localization, translation efficiency and nonsense-mediated mRNA decay (NMD) (By similarity).</text>
</comment>
<comment type="subunit">
    <text evidence="1">Part of the EJC core complex that contains casc3, eif4a3, magoh and rbm8a.</text>
</comment>
<comment type="subcellular location">
    <subcellularLocation>
        <location evidence="1">Nucleus</location>
    </subcellularLocation>
    <subcellularLocation>
        <location evidence="1">Nucleus speckle</location>
    </subcellularLocation>
    <subcellularLocation>
        <location evidence="1">Cytoplasm</location>
    </subcellularLocation>
    <text evidence="1">Travels to the cytoplasm as part of the exon junction complex (EJC) bound to mRNA.</text>
</comment>
<comment type="similarity">
    <text evidence="2">Belongs to the mago nashi family.</text>
</comment>
<name>MGN_XENLA</name>
<proteinExistence type="evidence at transcript level"/>
<sequence>MGSDFYLRYYVGHKGKFGHEFLEFEFRPDGKLRYANNSNYKNDVMIRKEAYVHKSVMEELKRIIDDSEVTKEDDALWPPPDRVGRQELEIVIGDEHISFTTSKIGSLIDVNQSKDPEGLRVFYYLVQDLKCLVFSLIGLHFKIKPI</sequence>
<evidence type="ECO:0000250" key="1">
    <source>
        <dbReference type="UniProtKB" id="P61326"/>
    </source>
</evidence>
<evidence type="ECO:0000305" key="2"/>
<keyword id="KW-0963">Cytoplasm</keyword>
<keyword id="KW-0507">mRNA processing</keyword>
<keyword id="KW-0508">mRNA splicing</keyword>
<keyword id="KW-0509">mRNA transport</keyword>
<keyword id="KW-0539">Nucleus</keyword>
<keyword id="KW-1185">Reference proteome</keyword>
<keyword id="KW-0694">RNA-binding</keyword>
<keyword id="KW-0813">Transport</keyword>